<keyword id="KW-0067">ATP-binding</keyword>
<keyword id="KW-0436">Ligase</keyword>
<keyword id="KW-0496">Mitochondrion</keyword>
<keyword id="KW-0547">Nucleotide-binding</keyword>
<keyword id="KW-0648">Protein biosynthesis</keyword>
<keyword id="KW-1185">Reference proteome</keyword>
<dbReference type="EC" id="6.3.5.7" evidence="1"/>
<dbReference type="EMBL" id="CU633899">
    <property type="protein sequence ID" value="CAP67844.1"/>
    <property type="molecule type" value="Genomic_DNA"/>
</dbReference>
<dbReference type="EMBL" id="FO904936">
    <property type="protein sequence ID" value="CDP24103.1"/>
    <property type="molecule type" value="Genomic_DNA"/>
</dbReference>
<dbReference type="RefSeq" id="XP_001907173.1">
    <property type="nucleotide sequence ID" value="XM_001907138.1"/>
</dbReference>
<dbReference type="SMR" id="B2ATX1"/>
<dbReference type="FunCoup" id="B2ATX1">
    <property type="interactions" value="322"/>
</dbReference>
<dbReference type="STRING" id="515849.B2ATX1"/>
<dbReference type="GeneID" id="6191148"/>
<dbReference type="KEGG" id="pan:PODANSg4206"/>
<dbReference type="VEuPathDB" id="FungiDB:PODANS_1_17240"/>
<dbReference type="eggNOG" id="KOG1211">
    <property type="taxonomic scope" value="Eukaryota"/>
</dbReference>
<dbReference type="HOGENOM" id="CLU_009600_7_6_1"/>
<dbReference type="InParanoid" id="B2ATX1"/>
<dbReference type="OrthoDB" id="421993at2759"/>
<dbReference type="Proteomes" id="UP000001197">
    <property type="component" value="Chromosome 1"/>
</dbReference>
<dbReference type="GO" id="GO:0030956">
    <property type="term" value="C:glutamyl-tRNA(Gln) amidotransferase complex"/>
    <property type="evidence" value="ECO:0007669"/>
    <property type="project" value="UniProtKB-UniRule"/>
</dbReference>
<dbReference type="GO" id="GO:0005739">
    <property type="term" value="C:mitochondrion"/>
    <property type="evidence" value="ECO:0007669"/>
    <property type="project" value="UniProtKB-SubCell"/>
</dbReference>
<dbReference type="GO" id="GO:0005524">
    <property type="term" value="F:ATP binding"/>
    <property type="evidence" value="ECO:0007669"/>
    <property type="project" value="UniProtKB-KW"/>
</dbReference>
<dbReference type="GO" id="GO:0050567">
    <property type="term" value="F:glutaminyl-tRNA synthase (glutamine-hydrolyzing) activity"/>
    <property type="evidence" value="ECO:0007669"/>
    <property type="project" value="UniProtKB-UniRule"/>
</dbReference>
<dbReference type="GO" id="GO:0070681">
    <property type="term" value="P:glutaminyl-tRNAGln biosynthesis via transamidation"/>
    <property type="evidence" value="ECO:0007669"/>
    <property type="project" value="UniProtKB-UniRule"/>
</dbReference>
<dbReference type="GO" id="GO:0032543">
    <property type="term" value="P:mitochondrial translation"/>
    <property type="evidence" value="ECO:0007669"/>
    <property type="project" value="UniProtKB-UniRule"/>
</dbReference>
<dbReference type="Gene3D" id="3.90.1300.10">
    <property type="entry name" value="Amidase signature (AS) domain"/>
    <property type="match status" value="1"/>
</dbReference>
<dbReference type="HAMAP" id="MF_00120">
    <property type="entry name" value="GatA"/>
    <property type="match status" value="1"/>
</dbReference>
<dbReference type="InterPro" id="IPR000120">
    <property type="entry name" value="Amidase"/>
</dbReference>
<dbReference type="InterPro" id="IPR020556">
    <property type="entry name" value="Amidase_CS"/>
</dbReference>
<dbReference type="InterPro" id="IPR023631">
    <property type="entry name" value="Amidase_dom"/>
</dbReference>
<dbReference type="InterPro" id="IPR036928">
    <property type="entry name" value="AS_sf"/>
</dbReference>
<dbReference type="InterPro" id="IPR004412">
    <property type="entry name" value="GatA"/>
</dbReference>
<dbReference type="PANTHER" id="PTHR11895:SF7">
    <property type="entry name" value="GLUTAMYL-TRNA(GLN) AMIDOTRANSFERASE SUBUNIT A, MITOCHONDRIAL"/>
    <property type="match status" value="1"/>
</dbReference>
<dbReference type="PANTHER" id="PTHR11895">
    <property type="entry name" value="TRANSAMIDASE"/>
    <property type="match status" value="1"/>
</dbReference>
<dbReference type="Pfam" id="PF01425">
    <property type="entry name" value="Amidase"/>
    <property type="match status" value="1"/>
</dbReference>
<dbReference type="SUPFAM" id="SSF75304">
    <property type="entry name" value="Amidase signature (AS) enzymes"/>
    <property type="match status" value="1"/>
</dbReference>
<dbReference type="PROSITE" id="PS00571">
    <property type="entry name" value="AMIDASES"/>
    <property type="match status" value="1"/>
</dbReference>
<name>GATA_PODAN</name>
<gene>
    <name type="ordered locus">Pa_1_17240</name>
    <name type="ORF">PODANS_1_17240</name>
</gene>
<protein>
    <recommendedName>
        <fullName evidence="1">Glutamyl-tRNA(Gln) amidotransferase subunit A, mitochondrial</fullName>
        <shortName evidence="1">Glu-AdT subunit A</shortName>
        <ecNumber evidence="1">6.3.5.7</ecNumber>
    </recommendedName>
</protein>
<comment type="function">
    <text evidence="1">Allows the formation of correctly charged Gln-tRNA(Gln) through the transamidation of misacylated Glu-tRNA(Gln) in the mitochondria. The reaction takes place in the presence of glutamine and ATP through an activated gamma-phospho-Glu-tRNA(Gln).</text>
</comment>
<comment type="catalytic activity">
    <reaction evidence="1">
        <text>L-glutamyl-tRNA(Gln) + L-glutamine + ATP + H2O = L-glutaminyl-tRNA(Gln) + L-glutamate + ADP + phosphate + H(+)</text>
        <dbReference type="Rhea" id="RHEA:17521"/>
        <dbReference type="Rhea" id="RHEA-COMP:9681"/>
        <dbReference type="Rhea" id="RHEA-COMP:9684"/>
        <dbReference type="ChEBI" id="CHEBI:15377"/>
        <dbReference type="ChEBI" id="CHEBI:15378"/>
        <dbReference type="ChEBI" id="CHEBI:29985"/>
        <dbReference type="ChEBI" id="CHEBI:30616"/>
        <dbReference type="ChEBI" id="CHEBI:43474"/>
        <dbReference type="ChEBI" id="CHEBI:58359"/>
        <dbReference type="ChEBI" id="CHEBI:78520"/>
        <dbReference type="ChEBI" id="CHEBI:78521"/>
        <dbReference type="ChEBI" id="CHEBI:456216"/>
        <dbReference type="EC" id="6.3.5.7"/>
    </reaction>
</comment>
<comment type="subunit">
    <text evidence="1">Subunit of the heterotrimeric GatCAB amidotransferase (AdT) complex, composed of A, B and C subunits.</text>
</comment>
<comment type="subcellular location">
    <subcellularLocation>
        <location evidence="1">Mitochondrion</location>
    </subcellularLocation>
</comment>
<comment type="similarity">
    <text evidence="1">Belongs to the amidase family. GatA subfamily.</text>
</comment>
<accession>B2ATX1</accession>
<accession>A0A090D4I2</accession>
<reference key="1">
    <citation type="journal article" date="2008" name="Genome Biol.">
        <title>The genome sequence of the model ascomycete fungus Podospora anserina.</title>
        <authorList>
            <person name="Espagne E."/>
            <person name="Lespinet O."/>
            <person name="Malagnac F."/>
            <person name="Da Silva C."/>
            <person name="Jaillon O."/>
            <person name="Porcel B.M."/>
            <person name="Couloux A."/>
            <person name="Aury J.-M."/>
            <person name="Segurens B."/>
            <person name="Poulain J."/>
            <person name="Anthouard V."/>
            <person name="Grossetete S."/>
            <person name="Khalili H."/>
            <person name="Coppin E."/>
            <person name="Dequard-Chablat M."/>
            <person name="Picard M."/>
            <person name="Contamine V."/>
            <person name="Arnaise S."/>
            <person name="Bourdais A."/>
            <person name="Berteaux-Lecellier V."/>
            <person name="Gautheret D."/>
            <person name="de Vries R.P."/>
            <person name="Battaglia E."/>
            <person name="Coutinho P.M."/>
            <person name="Danchin E.G.J."/>
            <person name="Henrissat B."/>
            <person name="El Khoury R."/>
            <person name="Sainsard-Chanet A."/>
            <person name="Boivin A."/>
            <person name="Pinan-Lucarre B."/>
            <person name="Sellem C.H."/>
            <person name="Debuchy R."/>
            <person name="Wincker P."/>
            <person name="Weissenbach J."/>
            <person name="Silar P."/>
        </authorList>
    </citation>
    <scope>NUCLEOTIDE SEQUENCE [LARGE SCALE GENOMIC DNA]</scope>
    <source>
        <strain>S / ATCC MYA-4624 / DSM 980 / FGSC 10383</strain>
    </source>
</reference>
<reference key="2">
    <citation type="journal article" date="2014" name="Genetics">
        <title>Maintaining two mating types: Structure of the mating type locus and its role in heterokaryosis in Podospora anserina.</title>
        <authorList>
            <person name="Grognet P."/>
            <person name="Bidard F."/>
            <person name="Kuchly C."/>
            <person name="Tong L.C.H."/>
            <person name="Coppin E."/>
            <person name="Benkhali J.A."/>
            <person name="Couloux A."/>
            <person name="Wincker P."/>
            <person name="Debuchy R."/>
            <person name="Silar P."/>
        </authorList>
    </citation>
    <scope>GENOME REANNOTATION</scope>
    <source>
        <strain>S / ATCC MYA-4624 / DSM 980 / FGSC 10383</strain>
    </source>
</reference>
<evidence type="ECO:0000255" key="1">
    <source>
        <dbReference type="HAMAP-Rule" id="MF_03150"/>
    </source>
</evidence>
<evidence type="ECO:0000256" key="2">
    <source>
        <dbReference type="SAM" id="MobiDB-lite"/>
    </source>
</evidence>
<organism>
    <name type="scientific">Podospora anserina (strain S / ATCC MYA-4624 / DSM 980 / FGSC 10383)</name>
    <name type="common">Pleurage anserina</name>
    <dbReference type="NCBI Taxonomy" id="515849"/>
    <lineage>
        <taxon>Eukaryota</taxon>
        <taxon>Fungi</taxon>
        <taxon>Dikarya</taxon>
        <taxon>Ascomycota</taxon>
        <taxon>Pezizomycotina</taxon>
        <taxon>Sordariomycetes</taxon>
        <taxon>Sordariomycetidae</taxon>
        <taxon>Sordariales</taxon>
        <taxon>Podosporaceae</taxon>
        <taxon>Podospora</taxon>
        <taxon>Podospora anserina</taxon>
    </lineage>
</organism>
<proteinExistence type="inferred from homology"/>
<sequence length="507" mass="54516">MLSRSGLRGARLRVVSLTSQRRLLNHFITHPPEPIPPPPPPAPSSSPSPKQFTLAVKDNIATTIPGLPTTCASGILSKSYVSPIEATIITQLRARGAVITGKTNLDEFGMGSHSIYSHYGPVSQDTPPETSAGGSSGGSAVAVANGEVELALGTDTGGSVRLPAAYTGIIGYKPSYGMISRYGVIPYANSLDTVGFLSKQINPLKELIIGERGLWKEHDSNDPTSLTTAARKRCAAQRRGYRSRQGQTTELEGLKFGIPLEYNIAELDPEIRDAWAAAAKRLQDAGARIVPVSLPTTKHALAAYYVIAPAEASSNLAKYDGVRYGARDAEGASDASAGGVLYASTRGKGFGEEVKRRILLGSYTLSSEAMDNYFIKAQRVRRLVRRDFNRVFALENPLQERETFELSDLPEEVEMEDKWGPEEVDFLLCPTAPTLAPKLKGVMEQQPVDAYMNDVFTVPASLAGLPAISVPMKVATEGAAGLQLIGQYWDDARLLDVADAVAKEVRT</sequence>
<feature type="chain" id="PRO_0000413357" description="Glutamyl-tRNA(Gln) amidotransferase subunit A, mitochondrial">
    <location>
        <begin position="1"/>
        <end position="507"/>
    </location>
</feature>
<feature type="region of interest" description="Disordered" evidence="2">
    <location>
        <begin position="29"/>
        <end position="51"/>
    </location>
</feature>
<feature type="compositionally biased region" description="Pro residues" evidence="2">
    <location>
        <begin position="31"/>
        <end position="46"/>
    </location>
</feature>
<feature type="active site" description="Charge relay system" evidence="1">
    <location>
        <position position="57"/>
    </location>
</feature>
<feature type="active site" description="Charge relay system" evidence="1">
    <location>
        <position position="135"/>
    </location>
</feature>
<feature type="active site" description="Acyl-ester intermediate" evidence="1">
    <location>
        <position position="159"/>
    </location>
</feature>